<gene>
    <name type="ordered locus">RP222</name>
</gene>
<sequence length="118" mass="13808">MLMYKKIVGHKKNMLPATLNNIDDSQNVALNRKKSENKKLTLQEKIELSWQFLYDLTEIILNKFSKEDVVQVNKCGQILFENGVRYEHVVDLITPHQVRSHTQLVEQEQSKGKKALRM</sequence>
<accession>Q9ZDV2</accession>
<protein>
    <recommendedName>
        <fullName>Uncharacterized protein RP222</fullName>
    </recommendedName>
</protein>
<keyword id="KW-1185">Reference proteome</keyword>
<organism>
    <name type="scientific">Rickettsia prowazekii (strain Madrid E)</name>
    <dbReference type="NCBI Taxonomy" id="272947"/>
    <lineage>
        <taxon>Bacteria</taxon>
        <taxon>Pseudomonadati</taxon>
        <taxon>Pseudomonadota</taxon>
        <taxon>Alphaproteobacteria</taxon>
        <taxon>Rickettsiales</taxon>
        <taxon>Rickettsiaceae</taxon>
        <taxon>Rickettsieae</taxon>
        <taxon>Rickettsia</taxon>
        <taxon>typhus group</taxon>
    </lineage>
</organism>
<proteinExistence type="predicted"/>
<reference key="1">
    <citation type="journal article" date="1998" name="Nature">
        <title>The genome sequence of Rickettsia prowazekii and the origin of mitochondria.</title>
        <authorList>
            <person name="Andersson S.G.E."/>
            <person name="Zomorodipour A."/>
            <person name="Andersson J.O."/>
            <person name="Sicheritz-Ponten T."/>
            <person name="Alsmark U.C.M."/>
            <person name="Podowski R.M."/>
            <person name="Naeslund A.K."/>
            <person name="Eriksson A.-S."/>
            <person name="Winkler H.H."/>
            <person name="Kurland C.G."/>
        </authorList>
    </citation>
    <scope>NUCLEOTIDE SEQUENCE [LARGE SCALE GENOMIC DNA]</scope>
    <source>
        <strain>Madrid E</strain>
    </source>
</reference>
<feature type="chain" id="PRO_0000101334" description="Uncharacterized protein RP222">
    <location>
        <begin position="1"/>
        <end position="118"/>
    </location>
</feature>
<name>Y222_RICPR</name>
<dbReference type="EMBL" id="AJ235270">
    <property type="protein sequence ID" value="CAA14685.1"/>
    <property type="molecule type" value="Genomic_DNA"/>
</dbReference>
<dbReference type="PIR" id="F71733">
    <property type="entry name" value="F71733"/>
</dbReference>
<dbReference type="RefSeq" id="NP_220608.1">
    <property type="nucleotide sequence ID" value="NC_000963.1"/>
</dbReference>
<dbReference type="RefSeq" id="WP_010886239.1">
    <property type="nucleotide sequence ID" value="NC_000963.1"/>
</dbReference>
<dbReference type="SMR" id="Q9ZDV2"/>
<dbReference type="STRING" id="272947.gene:17555303"/>
<dbReference type="EnsemblBacteria" id="CAA14685">
    <property type="protein sequence ID" value="CAA14685"/>
    <property type="gene ID" value="CAA14685"/>
</dbReference>
<dbReference type="KEGG" id="rpr:RP222"/>
<dbReference type="PATRIC" id="fig|272947.5.peg.230"/>
<dbReference type="eggNOG" id="ENOG50312BE">
    <property type="taxonomic scope" value="Bacteria"/>
</dbReference>
<dbReference type="HOGENOM" id="CLU_118114_0_0_5"/>
<dbReference type="OrthoDB" id="7160975at2"/>
<dbReference type="Proteomes" id="UP000002480">
    <property type="component" value="Chromosome"/>
</dbReference>
<dbReference type="InterPro" id="IPR022589">
    <property type="entry name" value="DUF2660"/>
</dbReference>
<dbReference type="Pfam" id="PF10859">
    <property type="entry name" value="DUF2660"/>
    <property type="match status" value="1"/>
</dbReference>